<gene>
    <name evidence="1" type="primary">hisI</name>
    <name type="ordered locus">BCE_1531</name>
</gene>
<evidence type="ECO:0000255" key="1">
    <source>
        <dbReference type="HAMAP-Rule" id="MF_01021"/>
    </source>
</evidence>
<dbReference type="EC" id="3.5.4.19" evidence="1"/>
<dbReference type="EMBL" id="AE017194">
    <property type="protein sequence ID" value="AAS40460.1"/>
    <property type="molecule type" value="Genomic_DNA"/>
</dbReference>
<dbReference type="SMR" id="P62393"/>
<dbReference type="KEGG" id="bca:BCE_1531"/>
<dbReference type="HOGENOM" id="CLU_048577_5_3_9"/>
<dbReference type="UniPathway" id="UPA00031">
    <property type="reaction ID" value="UER00008"/>
</dbReference>
<dbReference type="Proteomes" id="UP000002527">
    <property type="component" value="Chromosome"/>
</dbReference>
<dbReference type="GO" id="GO:0005737">
    <property type="term" value="C:cytoplasm"/>
    <property type="evidence" value="ECO:0007669"/>
    <property type="project" value="UniProtKB-SubCell"/>
</dbReference>
<dbReference type="GO" id="GO:0000287">
    <property type="term" value="F:magnesium ion binding"/>
    <property type="evidence" value="ECO:0007669"/>
    <property type="project" value="UniProtKB-UniRule"/>
</dbReference>
<dbReference type="GO" id="GO:0004635">
    <property type="term" value="F:phosphoribosyl-AMP cyclohydrolase activity"/>
    <property type="evidence" value="ECO:0007669"/>
    <property type="project" value="UniProtKB-UniRule"/>
</dbReference>
<dbReference type="GO" id="GO:0008270">
    <property type="term" value="F:zinc ion binding"/>
    <property type="evidence" value="ECO:0007669"/>
    <property type="project" value="UniProtKB-UniRule"/>
</dbReference>
<dbReference type="GO" id="GO:0000105">
    <property type="term" value="P:L-histidine biosynthetic process"/>
    <property type="evidence" value="ECO:0007669"/>
    <property type="project" value="UniProtKB-UniRule"/>
</dbReference>
<dbReference type="FunFam" id="3.10.20.810:FF:000001">
    <property type="entry name" value="Histidine biosynthesis bifunctional protein HisIE"/>
    <property type="match status" value="1"/>
</dbReference>
<dbReference type="Gene3D" id="3.10.20.810">
    <property type="entry name" value="Phosphoribosyl-AMP cyclohydrolase"/>
    <property type="match status" value="1"/>
</dbReference>
<dbReference type="HAMAP" id="MF_01021">
    <property type="entry name" value="HisI"/>
    <property type="match status" value="1"/>
</dbReference>
<dbReference type="InterPro" id="IPR026660">
    <property type="entry name" value="PRA-CH"/>
</dbReference>
<dbReference type="InterPro" id="IPR002496">
    <property type="entry name" value="PRib_AMP_CycHydrolase_dom"/>
</dbReference>
<dbReference type="InterPro" id="IPR038019">
    <property type="entry name" value="PRib_AMP_CycHydrolase_sf"/>
</dbReference>
<dbReference type="NCBIfam" id="NF000768">
    <property type="entry name" value="PRK00051.1"/>
    <property type="match status" value="1"/>
</dbReference>
<dbReference type="PANTHER" id="PTHR42945">
    <property type="entry name" value="HISTIDINE BIOSYNTHESIS BIFUNCTIONAL PROTEIN"/>
    <property type="match status" value="1"/>
</dbReference>
<dbReference type="PANTHER" id="PTHR42945:SF1">
    <property type="entry name" value="HISTIDINE BIOSYNTHESIS BIFUNCTIONAL PROTEIN HIS7"/>
    <property type="match status" value="1"/>
</dbReference>
<dbReference type="Pfam" id="PF01502">
    <property type="entry name" value="PRA-CH"/>
    <property type="match status" value="1"/>
</dbReference>
<dbReference type="SUPFAM" id="SSF141734">
    <property type="entry name" value="HisI-like"/>
    <property type="match status" value="1"/>
</dbReference>
<name>HIS3_BACC1</name>
<reference key="1">
    <citation type="journal article" date="2004" name="Nucleic Acids Res.">
        <title>The genome sequence of Bacillus cereus ATCC 10987 reveals metabolic adaptations and a large plasmid related to Bacillus anthracis pXO1.</title>
        <authorList>
            <person name="Rasko D.A."/>
            <person name="Ravel J."/>
            <person name="Oekstad O.A."/>
            <person name="Helgason E."/>
            <person name="Cer R.Z."/>
            <person name="Jiang L."/>
            <person name="Shores K.A."/>
            <person name="Fouts D.E."/>
            <person name="Tourasse N.J."/>
            <person name="Angiuoli S.V."/>
            <person name="Kolonay J.F."/>
            <person name="Nelson W.C."/>
            <person name="Kolstoe A.-B."/>
            <person name="Fraser C.M."/>
            <person name="Read T.D."/>
        </authorList>
    </citation>
    <scope>NUCLEOTIDE SEQUENCE [LARGE SCALE GENOMIC DNA]</scope>
    <source>
        <strain>ATCC 10987 / NRS 248</strain>
    </source>
</reference>
<accession>P62393</accession>
<comment type="function">
    <text evidence="1">Catalyzes the hydrolysis of the adenine ring of phosphoribosyl-AMP.</text>
</comment>
<comment type="catalytic activity">
    <reaction evidence="1">
        <text>1-(5-phospho-beta-D-ribosyl)-5'-AMP + H2O = 1-(5-phospho-beta-D-ribosyl)-5-[(5-phospho-beta-D-ribosylamino)methylideneamino]imidazole-4-carboxamide</text>
        <dbReference type="Rhea" id="RHEA:20049"/>
        <dbReference type="ChEBI" id="CHEBI:15377"/>
        <dbReference type="ChEBI" id="CHEBI:58435"/>
        <dbReference type="ChEBI" id="CHEBI:59457"/>
        <dbReference type="EC" id="3.5.4.19"/>
    </reaction>
</comment>
<comment type="cofactor">
    <cofactor evidence="1">
        <name>Mg(2+)</name>
        <dbReference type="ChEBI" id="CHEBI:18420"/>
    </cofactor>
    <text evidence="1">Binds 1 Mg(2+) ion per subunit.</text>
</comment>
<comment type="cofactor">
    <cofactor evidence="1">
        <name>Zn(2+)</name>
        <dbReference type="ChEBI" id="CHEBI:29105"/>
    </cofactor>
    <text evidence="1">Binds 1 zinc ion per subunit.</text>
</comment>
<comment type="pathway">
    <text evidence="1">Amino-acid biosynthesis; L-histidine biosynthesis; L-histidine from 5-phospho-alpha-D-ribose 1-diphosphate: step 3/9.</text>
</comment>
<comment type="subunit">
    <text evidence="1">Homodimer.</text>
</comment>
<comment type="subcellular location">
    <subcellularLocation>
        <location evidence="1">Cytoplasm</location>
    </subcellularLocation>
</comment>
<comment type="similarity">
    <text evidence="1">Belongs to the PRA-CH family.</text>
</comment>
<sequence>MKPNFSKGLLPAVVIEEDTKEVLMLAYMNEEAYEKTIETKRTWFYSRSRRSLWNKGETSGNVQHVQSLYLDCDQDSIVVVVKQVGPACHTGEKTCFHYKII</sequence>
<feature type="chain" id="PRO_0000136459" description="Phosphoribosyl-AMP cyclohydrolase">
    <location>
        <begin position="1"/>
        <end position="101"/>
    </location>
</feature>
<feature type="binding site" evidence="1">
    <location>
        <position position="71"/>
    </location>
    <ligand>
        <name>Mg(2+)</name>
        <dbReference type="ChEBI" id="CHEBI:18420"/>
    </ligand>
</feature>
<feature type="binding site" evidence="1">
    <location>
        <position position="72"/>
    </location>
    <ligand>
        <name>Zn(2+)</name>
        <dbReference type="ChEBI" id="CHEBI:29105"/>
        <note>ligand shared between dimeric partners</note>
    </ligand>
</feature>
<feature type="binding site" evidence="1">
    <location>
        <position position="73"/>
    </location>
    <ligand>
        <name>Mg(2+)</name>
        <dbReference type="ChEBI" id="CHEBI:18420"/>
    </ligand>
</feature>
<feature type="binding site" evidence="1">
    <location>
        <position position="75"/>
    </location>
    <ligand>
        <name>Mg(2+)</name>
        <dbReference type="ChEBI" id="CHEBI:18420"/>
    </ligand>
</feature>
<feature type="binding site" evidence="1">
    <location>
        <position position="88"/>
    </location>
    <ligand>
        <name>Zn(2+)</name>
        <dbReference type="ChEBI" id="CHEBI:29105"/>
        <note>ligand shared between dimeric partners</note>
    </ligand>
</feature>
<feature type="binding site" evidence="1">
    <location>
        <position position="95"/>
    </location>
    <ligand>
        <name>Zn(2+)</name>
        <dbReference type="ChEBI" id="CHEBI:29105"/>
        <note>ligand shared between dimeric partners</note>
    </ligand>
</feature>
<keyword id="KW-0028">Amino-acid biosynthesis</keyword>
<keyword id="KW-0963">Cytoplasm</keyword>
<keyword id="KW-0368">Histidine biosynthesis</keyword>
<keyword id="KW-0378">Hydrolase</keyword>
<keyword id="KW-0460">Magnesium</keyword>
<keyword id="KW-0479">Metal-binding</keyword>
<keyword id="KW-0862">Zinc</keyword>
<proteinExistence type="inferred from homology"/>
<organism>
    <name type="scientific">Bacillus cereus (strain ATCC 10987 / NRS 248)</name>
    <dbReference type="NCBI Taxonomy" id="222523"/>
    <lineage>
        <taxon>Bacteria</taxon>
        <taxon>Bacillati</taxon>
        <taxon>Bacillota</taxon>
        <taxon>Bacilli</taxon>
        <taxon>Bacillales</taxon>
        <taxon>Bacillaceae</taxon>
        <taxon>Bacillus</taxon>
        <taxon>Bacillus cereus group</taxon>
    </lineage>
</organism>
<protein>
    <recommendedName>
        <fullName evidence="1">Phosphoribosyl-AMP cyclohydrolase</fullName>
        <shortName evidence="1">PRA-CH</shortName>
        <ecNumber evidence="1">3.5.4.19</ecNumber>
    </recommendedName>
</protein>